<reference key="1">
    <citation type="journal article" date="2010" name="Appl. Environ. Microbiol.">
        <title>The genome sequence of Psychrobacter arcticus 273-4, a psychroactive Siberian permafrost bacterium, reveals mechanisms for adaptation to low-temperature growth.</title>
        <authorList>
            <person name="Ayala-del-Rio H.L."/>
            <person name="Chain P.S."/>
            <person name="Grzymski J.J."/>
            <person name="Ponder M.A."/>
            <person name="Ivanova N."/>
            <person name="Bergholz P.W."/>
            <person name="Di Bartolo G."/>
            <person name="Hauser L."/>
            <person name="Land M."/>
            <person name="Bakermans C."/>
            <person name="Rodrigues D."/>
            <person name="Klappenbach J."/>
            <person name="Zarka D."/>
            <person name="Larimer F."/>
            <person name="Richardson P."/>
            <person name="Murray A."/>
            <person name="Thomashow M."/>
            <person name="Tiedje J.M."/>
        </authorList>
    </citation>
    <scope>NUCLEOTIDE SEQUENCE [LARGE SCALE GENOMIC DNA]</scope>
    <source>
        <strain>DSM 17307 / VKM B-2377 / 273-4</strain>
    </source>
</reference>
<dbReference type="EC" id="2.7.7.38" evidence="1"/>
<dbReference type="EMBL" id="CP000082">
    <property type="protein sequence ID" value="AAZ19164.1"/>
    <property type="molecule type" value="Genomic_DNA"/>
</dbReference>
<dbReference type="RefSeq" id="WP_011280586.1">
    <property type="nucleotide sequence ID" value="NC_007204.1"/>
</dbReference>
<dbReference type="SMR" id="Q4FS44"/>
<dbReference type="STRING" id="259536.Psyc_1314"/>
<dbReference type="KEGG" id="par:Psyc_1314"/>
<dbReference type="eggNOG" id="COG1212">
    <property type="taxonomic scope" value="Bacteria"/>
</dbReference>
<dbReference type="HOGENOM" id="CLU_065038_1_0_6"/>
<dbReference type="OrthoDB" id="9815559at2"/>
<dbReference type="UniPathway" id="UPA00030"/>
<dbReference type="UniPathway" id="UPA00358">
    <property type="reaction ID" value="UER00476"/>
</dbReference>
<dbReference type="Proteomes" id="UP000000546">
    <property type="component" value="Chromosome"/>
</dbReference>
<dbReference type="GO" id="GO:0005829">
    <property type="term" value="C:cytosol"/>
    <property type="evidence" value="ECO:0007669"/>
    <property type="project" value="TreeGrafter"/>
</dbReference>
<dbReference type="GO" id="GO:0008690">
    <property type="term" value="F:3-deoxy-manno-octulosonate cytidylyltransferase activity"/>
    <property type="evidence" value="ECO:0007669"/>
    <property type="project" value="UniProtKB-UniRule"/>
</dbReference>
<dbReference type="GO" id="GO:0033468">
    <property type="term" value="P:CMP-keto-3-deoxy-D-manno-octulosonic acid biosynthetic process"/>
    <property type="evidence" value="ECO:0007669"/>
    <property type="project" value="UniProtKB-UniRule"/>
</dbReference>
<dbReference type="GO" id="GO:0009103">
    <property type="term" value="P:lipopolysaccharide biosynthetic process"/>
    <property type="evidence" value="ECO:0007669"/>
    <property type="project" value="UniProtKB-UniRule"/>
</dbReference>
<dbReference type="CDD" id="cd02517">
    <property type="entry name" value="CMP-KDO-Synthetase"/>
    <property type="match status" value="1"/>
</dbReference>
<dbReference type="FunFam" id="3.90.550.10:FF:000011">
    <property type="entry name" value="3-deoxy-manno-octulosonate cytidylyltransferase"/>
    <property type="match status" value="1"/>
</dbReference>
<dbReference type="Gene3D" id="3.90.550.10">
    <property type="entry name" value="Spore Coat Polysaccharide Biosynthesis Protein SpsA, Chain A"/>
    <property type="match status" value="1"/>
</dbReference>
<dbReference type="HAMAP" id="MF_00057">
    <property type="entry name" value="KdsB"/>
    <property type="match status" value="1"/>
</dbReference>
<dbReference type="InterPro" id="IPR003329">
    <property type="entry name" value="Cytidylyl_trans"/>
</dbReference>
<dbReference type="InterPro" id="IPR004528">
    <property type="entry name" value="KdsB"/>
</dbReference>
<dbReference type="InterPro" id="IPR029044">
    <property type="entry name" value="Nucleotide-diphossugar_trans"/>
</dbReference>
<dbReference type="NCBIfam" id="TIGR00466">
    <property type="entry name" value="kdsB"/>
    <property type="match status" value="1"/>
</dbReference>
<dbReference type="NCBIfam" id="NF003952">
    <property type="entry name" value="PRK05450.1-5"/>
    <property type="match status" value="1"/>
</dbReference>
<dbReference type="NCBIfam" id="NF009905">
    <property type="entry name" value="PRK13368.1"/>
    <property type="match status" value="1"/>
</dbReference>
<dbReference type="PANTHER" id="PTHR42866">
    <property type="entry name" value="3-DEOXY-MANNO-OCTULOSONATE CYTIDYLYLTRANSFERASE"/>
    <property type="match status" value="1"/>
</dbReference>
<dbReference type="PANTHER" id="PTHR42866:SF2">
    <property type="entry name" value="3-DEOXY-MANNO-OCTULOSONATE CYTIDYLYLTRANSFERASE, MITOCHONDRIAL"/>
    <property type="match status" value="1"/>
</dbReference>
<dbReference type="Pfam" id="PF02348">
    <property type="entry name" value="CTP_transf_3"/>
    <property type="match status" value="1"/>
</dbReference>
<dbReference type="SUPFAM" id="SSF53448">
    <property type="entry name" value="Nucleotide-diphospho-sugar transferases"/>
    <property type="match status" value="1"/>
</dbReference>
<gene>
    <name evidence="1" type="primary">kdsB</name>
    <name type="ordered locus">Psyc_1314</name>
</gene>
<protein>
    <recommendedName>
        <fullName evidence="1">3-deoxy-manno-octulosonate cytidylyltransferase</fullName>
        <ecNumber evidence="1">2.7.7.38</ecNumber>
    </recommendedName>
    <alternativeName>
        <fullName evidence="1">CMP-2-keto-3-deoxyoctulosonic acid synthase</fullName>
        <shortName evidence="1">CKS</shortName>
        <shortName evidence="1">CMP-KDO synthase</shortName>
    </alternativeName>
</protein>
<proteinExistence type="inferred from homology"/>
<evidence type="ECO:0000255" key="1">
    <source>
        <dbReference type="HAMAP-Rule" id="MF_00057"/>
    </source>
</evidence>
<keyword id="KW-0963">Cytoplasm</keyword>
<keyword id="KW-0448">Lipopolysaccharide biosynthesis</keyword>
<keyword id="KW-0548">Nucleotidyltransferase</keyword>
<keyword id="KW-1185">Reference proteome</keyword>
<keyword id="KW-0808">Transferase</keyword>
<comment type="function">
    <text evidence="1">Activates KDO (a required 8-carbon sugar) for incorporation into bacterial lipopolysaccharide in Gram-negative bacteria.</text>
</comment>
<comment type="catalytic activity">
    <reaction evidence="1">
        <text>3-deoxy-alpha-D-manno-oct-2-ulosonate + CTP = CMP-3-deoxy-beta-D-manno-octulosonate + diphosphate</text>
        <dbReference type="Rhea" id="RHEA:23448"/>
        <dbReference type="ChEBI" id="CHEBI:33019"/>
        <dbReference type="ChEBI" id="CHEBI:37563"/>
        <dbReference type="ChEBI" id="CHEBI:85986"/>
        <dbReference type="ChEBI" id="CHEBI:85987"/>
        <dbReference type="EC" id="2.7.7.38"/>
    </reaction>
</comment>
<comment type="pathway">
    <text evidence="1">Nucleotide-sugar biosynthesis; CMP-3-deoxy-D-manno-octulosonate biosynthesis; CMP-3-deoxy-D-manno-octulosonate from 3-deoxy-D-manno-octulosonate and CTP: step 1/1.</text>
</comment>
<comment type="pathway">
    <text evidence="1">Bacterial outer membrane biogenesis; lipopolysaccharide biosynthesis.</text>
</comment>
<comment type="subcellular location">
    <subcellularLocation>
        <location evidence="1">Cytoplasm</location>
    </subcellularLocation>
</comment>
<comment type="similarity">
    <text evidence="1">Belongs to the KdsB family.</text>
</comment>
<accession>Q4FS44</accession>
<sequence length="268" mass="29563">MSSALMPVRTHIVIPARLKSTRLPNKPLLTIHGKPMILWVAEKAQLADFADDMCIATDDESVAKVCAEAGFDVVMTRSDHASGTDRLAEVAAIKGWAAHDIVVNMQGDEPLIPPLLLEQVKTLLVQDAESVMATLCEPIEDYNTFIHPSVVKVVSQNTNNQQRAIYFSRAPIPCDRDVVLSDEDNTQAPKNAYRHLGLYAYRVSLLQQFVHWSQTPLEILESLEQLRVLENGGHIAIAKAACPLPAGVDTQEDLDRLNAMSLTAFQDD</sequence>
<feature type="chain" id="PRO_0000370122" description="3-deoxy-manno-octulosonate cytidylyltransferase">
    <location>
        <begin position="1"/>
        <end position="268"/>
    </location>
</feature>
<organism>
    <name type="scientific">Psychrobacter arcticus (strain DSM 17307 / VKM B-2377 / 273-4)</name>
    <dbReference type="NCBI Taxonomy" id="259536"/>
    <lineage>
        <taxon>Bacteria</taxon>
        <taxon>Pseudomonadati</taxon>
        <taxon>Pseudomonadota</taxon>
        <taxon>Gammaproteobacteria</taxon>
        <taxon>Moraxellales</taxon>
        <taxon>Moraxellaceae</taxon>
        <taxon>Psychrobacter</taxon>
    </lineage>
</organism>
<name>KDSB_PSYA2</name>